<keyword id="KW-0150">Chloroplast</keyword>
<keyword id="KW-0472">Membrane</keyword>
<keyword id="KW-0520">NAD</keyword>
<keyword id="KW-0521">NADP</keyword>
<keyword id="KW-0934">Plastid</keyword>
<keyword id="KW-0618">Plastoquinone</keyword>
<keyword id="KW-0874">Quinone</keyword>
<keyword id="KW-1185">Reference proteome</keyword>
<keyword id="KW-0793">Thylakoid</keyword>
<keyword id="KW-1278">Translocase</keyword>
<keyword id="KW-0812">Transmembrane</keyword>
<keyword id="KW-1133">Transmembrane helix</keyword>
<keyword id="KW-0813">Transport</keyword>
<comment type="function">
    <text evidence="1">NDH shuttles electrons from NAD(P)H:plastoquinone, via FMN and iron-sulfur (Fe-S) centers, to quinones in the photosynthetic chain and possibly in a chloroplast respiratory chain. The immediate electron acceptor for the enzyme in this species is believed to be plastoquinone. Couples the redox reaction to proton translocation, and thus conserves the redox energy in a proton gradient (By similarity).</text>
</comment>
<comment type="catalytic activity">
    <reaction>
        <text>a plastoquinone + NADH + (n+1) H(+)(in) = a plastoquinol + NAD(+) + n H(+)(out)</text>
        <dbReference type="Rhea" id="RHEA:42608"/>
        <dbReference type="Rhea" id="RHEA-COMP:9561"/>
        <dbReference type="Rhea" id="RHEA-COMP:9562"/>
        <dbReference type="ChEBI" id="CHEBI:15378"/>
        <dbReference type="ChEBI" id="CHEBI:17757"/>
        <dbReference type="ChEBI" id="CHEBI:57540"/>
        <dbReference type="ChEBI" id="CHEBI:57945"/>
        <dbReference type="ChEBI" id="CHEBI:62192"/>
    </reaction>
</comment>
<comment type="catalytic activity">
    <reaction>
        <text>a plastoquinone + NADPH + (n+1) H(+)(in) = a plastoquinol + NADP(+) + n H(+)(out)</text>
        <dbReference type="Rhea" id="RHEA:42612"/>
        <dbReference type="Rhea" id="RHEA-COMP:9561"/>
        <dbReference type="Rhea" id="RHEA-COMP:9562"/>
        <dbReference type="ChEBI" id="CHEBI:15378"/>
        <dbReference type="ChEBI" id="CHEBI:17757"/>
        <dbReference type="ChEBI" id="CHEBI:57783"/>
        <dbReference type="ChEBI" id="CHEBI:58349"/>
        <dbReference type="ChEBI" id="CHEBI:62192"/>
    </reaction>
</comment>
<comment type="subunit">
    <text evidence="1">NDH is composed of at least 16 different subunits, 5 of which are encoded in the nucleus.</text>
</comment>
<comment type="subcellular location">
    <subcellularLocation>
        <location evidence="1">Plastid</location>
        <location evidence="1">Chloroplast thylakoid membrane</location>
        <topology evidence="1">Multi-pass membrane protein</topology>
    </subcellularLocation>
</comment>
<comment type="similarity">
    <text evidence="3">Belongs to the complex I subunit 6 family.</text>
</comment>
<feature type="chain" id="PRO_0000277414" description="NAD(P)H-quinone oxidoreductase subunit 6, chloroplastic">
    <location>
        <begin position="1"/>
        <end position="176"/>
    </location>
</feature>
<feature type="transmembrane region" description="Helical" evidence="2">
    <location>
        <begin position="10"/>
        <end position="30"/>
    </location>
</feature>
<feature type="transmembrane region" description="Helical" evidence="2">
    <location>
        <begin position="32"/>
        <end position="52"/>
    </location>
</feature>
<feature type="transmembrane region" description="Helical" evidence="2">
    <location>
        <begin position="61"/>
        <end position="81"/>
    </location>
</feature>
<feature type="transmembrane region" description="Helical" evidence="2">
    <location>
        <begin position="92"/>
        <end position="112"/>
    </location>
</feature>
<feature type="transmembrane region" description="Helical" evidence="2">
    <location>
        <begin position="152"/>
        <end position="172"/>
    </location>
</feature>
<evidence type="ECO:0000250" key="1"/>
<evidence type="ECO:0000255" key="2"/>
<evidence type="ECO:0000305" key="3"/>
<reference key="1">
    <citation type="journal article" date="2006" name="Theor. Appl. Genet.">
        <title>Complete chloroplast genome sequences of Solanum bulbocastanum, Solanum lycopersicum and comparative analyses with other Solanaceae genomes.</title>
        <authorList>
            <person name="Daniell H."/>
            <person name="Lee S.-B."/>
            <person name="Grevich J."/>
            <person name="Saski C."/>
            <person name="Quesada-Vargas T."/>
            <person name="Guda C."/>
            <person name="Tomkins J."/>
            <person name="Jansen R.K."/>
        </authorList>
    </citation>
    <scope>NUCLEOTIDE SEQUENCE [LARGE SCALE GENOMIC DNA]</scope>
    <source>
        <strain>cv. LA3023</strain>
    </source>
</reference>
<reference key="2">
    <citation type="journal article" date="2006" name="J. Mol. Evol.">
        <title>Sequence of the tomato chloroplast DNA and evolutionary comparison of solanaceous plastid genomes.</title>
        <authorList>
            <person name="Kahlau S."/>
            <person name="Aspinall S."/>
            <person name="Gray J.C."/>
            <person name="Bock R."/>
        </authorList>
    </citation>
    <scope>NUCLEOTIDE SEQUENCE [LARGE SCALE GENOMIC DNA]</scope>
    <source>
        <strain>cv. IPA-6</strain>
    </source>
</reference>
<sequence>MDLSEPIHDFLLVFLGSGLILGGLGVVLLPNPIYSAFSLGLVLVCTSLFYILSNAYFVAAAQLLIYVGAINVLIIFAVMFMNGSEYYKDFHLWTVGDGITSMVCISLFISLITTISDTSWYGIIWTTRSNQIIEQDFLSNSQQIGIHLSTDFFLPFELISIILLVALIGAIAVARQ</sequence>
<dbReference type="EC" id="7.1.1.-"/>
<dbReference type="EMBL" id="DQ347959">
    <property type="protein sequence ID" value="ABC56354.1"/>
    <property type="molecule type" value="Genomic_DNA"/>
</dbReference>
<dbReference type="EMBL" id="AM087200">
    <property type="protein sequence ID" value="CAJ32448.1"/>
    <property type="molecule type" value="Genomic_DNA"/>
</dbReference>
<dbReference type="RefSeq" id="AP_004982.1">
    <property type="nucleotide sequence ID" value="AC_000188.1"/>
</dbReference>
<dbReference type="RefSeq" id="YP_008563142.1">
    <property type="nucleotide sequence ID" value="NC_007898.3"/>
</dbReference>
<dbReference type="SMR" id="Q2MI47"/>
<dbReference type="FunCoup" id="Q2MI47">
    <property type="interactions" value="15"/>
</dbReference>
<dbReference type="STRING" id="4081.Q2MI47"/>
<dbReference type="PaxDb" id="4081-Solyc03g013600.1.1"/>
<dbReference type="GeneID" id="3950402"/>
<dbReference type="KEGG" id="sly:3950402"/>
<dbReference type="eggNOG" id="ENOG502QQHR">
    <property type="taxonomic scope" value="Eukaryota"/>
</dbReference>
<dbReference type="InParanoid" id="Q2MI47"/>
<dbReference type="OrthoDB" id="1893972at2759"/>
<dbReference type="Proteomes" id="UP000004994">
    <property type="component" value="Chloroplast"/>
</dbReference>
<dbReference type="ExpressionAtlas" id="Q2MI47">
    <property type="expression patterns" value="baseline"/>
</dbReference>
<dbReference type="GO" id="GO:0009535">
    <property type="term" value="C:chloroplast thylakoid membrane"/>
    <property type="evidence" value="ECO:0007669"/>
    <property type="project" value="UniProtKB-SubCell"/>
</dbReference>
<dbReference type="GO" id="GO:0008137">
    <property type="term" value="F:NADH dehydrogenase (ubiquinone) activity"/>
    <property type="evidence" value="ECO:0007669"/>
    <property type="project" value="InterPro"/>
</dbReference>
<dbReference type="GO" id="GO:0048038">
    <property type="term" value="F:quinone binding"/>
    <property type="evidence" value="ECO:0007669"/>
    <property type="project" value="UniProtKB-KW"/>
</dbReference>
<dbReference type="FunFam" id="1.20.120.1200:FF:000002">
    <property type="entry name" value="NAD(P)H-quinone oxidoreductase subunit 6, chloroplastic"/>
    <property type="match status" value="1"/>
</dbReference>
<dbReference type="Gene3D" id="1.20.120.1200">
    <property type="entry name" value="NADH-ubiquinone/plastoquinone oxidoreductase chain 6, subunit NuoJ"/>
    <property type="match status" value="1"/>
</dbReference>
<dbReference type="InterPro" id="IPR050290">
    <property type="entry name" value="NAD(P)H-Q_Oxidoreduct_6"/>
</dbReference>
<dbReference type="InterPro" id="IPR001457">
    <property type="entry name" value="NADH_UbQ/plastoQ_OxRdtase_su6"/>
</dbReference>
<dbReference type="InterPro" id="IPR042106">
    <property type="entry name" value="Nuo/plastoQ_OxRdtase_6_NuoJ"/>
</dbReference>
<dbReference type="PANTHER" id="PTHR48479">
    <property type="entry name" value="NAD(P)H-QUINONE OXIDOREDUCTASE SUBUNIT 6, CHLOROPLASTIC"/>
    <property type="match status" value="1"/>
</dbReference>
<dbReference type="PANTHER" id="PTHR48479:SF1">
    <property type="entry name" value="NAD(P)H-QUINONE OXIDOREDUCTASE SUBUNIT 6, CHLOROPLASTIC"/>
    <property type="match status" value="1"/>
</dbReference>
<dbReference type="Pfam" id="PF00499">
    <property type="entry name" value="Oxidored_q3"/>
    <property type="match status" value="1"/>
</dbReference>
<gene>
    <name type="primary">ndhG</name>
</gene>
<protein>
    <recommendedName>
        <fullName>NAD(P)H-quinone oxidoreductase subunit 6, chloroplastic</fullName>
        <ecNumber>7.1.1.-</ecNumber>
    </recommendedName>
    <alternativeName>
        <fullName>NAD(P)H dehydrogenase subunit 6</fullName>
    </alternativeName>
    <alternativeName>
        <fullName>NADH-plastoquinone oxidoreductase subunit 6</fullName>
    </alternativeName>
</protein>
<organism>
    <name type="scientific">Solanum lycopersicum</name>
    <name type="common">Tomato</name>
    <name type="synonym">Lycopersicon esculentum</name>
    <dbReference type="NCBI Taxonomy" id="4081"/>
    <lineage>
        <taxon>Eukaryota</taxon>
        <taxon>Viridiplantae</taxon>
        <taxon>Streptophyta</taxon>
        <taxon>Embryophyta</taxon>
        <taxon>Tracheophyta</taxon>
        <taxon>Spermatophyta</taxon>
        <taxon>Magnoliopsida</taxon>
        <taxon>eudicotyledons</taxon>
        <taxon>Gunneridae</taxon>
        <taxon>Pentapetalae</taxon>
        <taxon>asterids</taxon>
        <taxon>lamiids</taxon>
        <taxon>Solanales</taxon>
        <taxon>Solanaceae</taxon>
        <taxon>Solanoideae</taxon>
        <taxon>Solaneae</taxon>
        <taxon>Solanum</taxon>
        <taxon>Solanum subgen. Lycopersicon</taxon>
    </lineage>
</organism>
<geneLocation type="chloroplast"/>
<accession>Q2MI47</accession>
<name>NU6C_SOLLC</name>
<proteinExistence type="inferred from homology"/>